<proteinExistence type="inferred from homology"/>
<feature type="chain" id="PRO_1000129341" description="Ribonuclease PH">
    <location>
        <begin position="1"/>
        <end position="238"/>
    </location>
</feature>
<feature type="binding site" evidence="1">
    <location>
        <position position="86"/>
    </location>
    <ligand>
        <name>phosphate</name>
        <dbReference type="ChEBI" id="CHEBI:43474"/>
        <note>substrate</note>
    </ligand>
</feature>
<feature type="binding site" evidence="1">
    <location>
        <begin position="124"/>
        <end position="126"/>
    </location>
    <ligand>
        <name>phosphate</name>
        <dbReference type="ChEBI" id="CHEBI:43474"/>
        <note>substrate</note>
    </ligand>
</feature>
<comment type="function">
    <text evidence="1">Phosphorolytic 3'-5' exoribonuclease that plays an important role in tRNA 3'-end maturation. Removes nucleotide residues following the 3'-CCA terminus of tRNAs; can also add nucleotides to the ends of RNA molecules by using nucleoside diphosphates as substrates, but this may not be physiologically important. Probably plays a role in initiation of 16S rRNA degradation (leading to ribosome degradation) during starvation.</text>
</comment>
<comment type="catalytic activity">
    <reaction evidence="1">
        <text>tRNA(n+1) + phosphate = tRNA(n) + a ribonucleoside 5'-diphosphate</text>
        <dbReference type="Rhea" id="RHEA:10628"/>
        <dbReference type="Rhea" id="RHEA-COMP:17343"/>
        <dbReference type="Rhea" id="RHEA-COMP:17344"/>
        <dbReference type="ChEBI" id="CHEBI:43474"/>
        <dbReference type="ChEBI" id="CHEBI:57930"/>
        <dbReference type="ChEBI" id="CHEBI:173114"/>
        <dbReference type="EC" id="2.7.7.56"/>
    </reaction>
</comment>
<comment type="subunit">
    <text evidence="1">Homohexameric ring arranged as a trimer of dimers.</text>
</comment>
<comment type="similarity">
    <text evidence="1">Belongs to the RNase PH family.</text>
</comment>
<dbReference type="EC" id="2.7.7.56" evidence="1"/>
<dbReference type="EMBL" id="CP000970">
    <property type="protein sequence ID" value="ACB16397.1"/>
    <property type="molecule type" value="Genomic_DNA"/>
</dbReference>
<dbReference type="RefSeq" id="WP_001247093.1">
    <property type="nucleotide sequence ID" value="NC_010498.1"/>
</dbReference>
<dbReference type="SMR" id="B1LK80"/>
<dbReference type="GeneID" id="93778358"/>
<dbReference type="KEGG" id="ecm:EcSMS35_3978"/>
<dbReference type="HOGENOM" id="CLU_050858_0_0_6"/>
<dbReference type="Proteomes" id="UP000007011">
    <property type="component" value="Chromosome"/>
</dbReference>
<dbReference type="GO" id="GO:0000175">
    <property type="term" value="F:3'-5'-RNA exonuclease activity"/>
    <property type="evidence" value="ECO:0007669"/>
    <property type="project" value="UniProtKB-UniRule"/>
</dbReference>
<dbReference type="GO" id="GO:0000049">
    <property type="term" value="F:tRNA binding"/>
    <property type="evidence" value="ECO:0007669"/>
    <property type="project" value="UniProtKB-UniRule"/>
</dbReference>
<dbReference type="GO" id="GO:0009022">
    <property type="term" value="F:tRNA nucleotidyltransferase activity"/>
    <property type="evidence" value="ECO:0007669"/>
    <property type="project" value="UniProtKB-UniRule"/>
</dbReference>
<dbReference type="GO" id="GO:0016075">
    <property type="term" value="P:rRNA catabolic process"/>
    <property type="evidence" value="ECO:0007669"/>
    <property type="project" value="UniProtKB-UniRule"/>
</dbReference>
<dbReference type="GO" id="GO:0006364">
    <property type="term" value="P:rRNA processing"/>
    <property type="evidence" value="ECO:0007669"/>
    <property type="project" value="UniProtKB-KW"/>
</dbReference>
<dbReference type="GO" id="GO:0008033">
    <property type="term" value="P:tRNA processing"/>
    <property type="evidence" value="ECO:0007669"/>
    <property type="project" value="UniProtKB-UniRule"/>
</dbReference>
<dbReference type="CDD" id="cd11362">
    <property type="entry name" value="RNase_PH_bact"/>
    <property type="match status" value="1"/>
</dbReference>
<dbReference type="FunFam" id="3.30.230.70:FF:000003">
    <property type="entry name" value="Ribonuclease PH"/>
    <property type="match status" value="1"/>
</dbReference>
<dbReference type="Gene3D" id="3.30.230.70">
    <property type="entry name" value="GHMP Kinase, N-terminal domain"/>
    <property type="match status" value="1"/>
</dbReference>
<dbReference type="HAMAP" id="MF_00564">
    <property type="entry name" value="RNase_PH"/>
    <property type="match status" value="1"/>
</dbReference>
<dbReference type="InterPro" id="IPR001247">
    <property type="entry name" value="ExoRNase_PH_dom1"/>
</dbReference>
<dbReference type="InterPro" id="IPR015847">
    <property type="entry name" value="ExoRNase_PH_dom2"/>
</dbReference>
<dbReference type="InterPro" id="IPR036345">
    <property type="entry name" value="ExoRNase_PH_dom2_sf"/>
</dbReference>
<dbReference type="InterPro" id="IPR027408">
    <property type="entry name" value="PNPase/RNase_PH_dom_sf"/>
</dbReference>
<dbReference type="InterPro" id="IPR020568">
    <property type="entry name" value="Ribosomal_Su5_D2-typ_SF"/>
</dbReference>
<dbReference type="InterPro" id="IPR050080">
    <property type="entry name" value="RNase_PH"/>
</dbReference>
<dbReference type="InterPro" id="IPR002381">
    <property type="entry name" value="RNase_PH_bac-type"/>
</dbReference>
<dbReference type="InterPro" id="IPR018336">
    <property type="entry name" value="RNase_PH_CS"/>
</dbReference>
<dbReference type="NCBIfam" id="TIGR01966">
    <property type="entry name" value="RNasePH"/>
    <property type="match status" value="1"/>
</dbReference>
<dbReference type="PANTHER" id="PTHR11953">
    <property type="entry name" value="EXOSOME COMPLEX COMPONENT"/>
    <property type="match status" value="1"/>
</dbReference>
<dbReference type="PANTHER" id="PTHR11953:SF0">
    <property type="entry name" value="EXOSOME COMPLEX COMPONENT RRP41"/>
    <property type="match status" value="1"/>
</dbReference>
<dbReference type="Pfam" id="PF01138">
    <property type="entry name" value="RNase_PH"/>
    <property type="match status" value="1"/>
</dbReference>
<dbReference type="Pfam" id="PF03725">
    <property type="entry name" value="RNase_PH_C"/>
    <property type="match status" value="1"/>
</dbReference>
<dbReference type="SUPFAM" id="SSF55666">
    <property type="entry name" value="Ribonuclease PH domain 2-like"/>
    <property type="match status" value="1"/>
</dbReference>
<dbReference type="SUPFAM" id="SSF54211">
    <property type="entry name" value="Ribosomal protein S5 domain 2-like"/>
    <property type="match status" value="1"/>
</dbReference>
<dbReference type="PROSITE" id="PS01277">
    <property type="entry name" value="RIBONUCLEASE_PH"/>
    <property type="match status" value="1"/>
</dbReference>
<sequence>MRPAGRSNNQVRPVTLTRNYTKHAEGSVLVEFGDTKVLCTASIEEGVPRFLKGQGQGWITAEYGMLPRSTHTRNAREAAKGKQGGRTMEIQRLIARALRAAVDLKALGEFTITLDCDVLQADGGTRTASITGACVALADALQKLVENGKLKTNPMKGMVAAVSVGIVNGEAVCDLEYVEDSAAETDMNVVMTEDGRIIEVQGTAEGEPFTHEELLTLLALARGGIESIVATQKAALAN</sequence>
<keyword id="KW-0548">Nucleotidyltransferase</keyword>
<keyword id="KW-0694">RNA-binding</keyword>
<keyword id="KW-0698">rRNA processing</keyword>
<keyword id="KW-0808">Transferase</keyword>
<keyword id="KW-0819">tRNA processing</keyword>
<keyword id="KW-0820">tRNA-binding</keyword>
<name>RNPH_ECOSM</name>
<gene>
    <name evidence="1" type="primary">rph</name>
    <name type="ordered locus">EcSMS35_3978</name>
</gene>
<accession>B1LK80</accession>
<organism>
    <name type="scientific">Escherichia coli (strain SMS-3-5 / SECEC)</name>
    <dbReference type="NCBI Taxonomy" id="439855"/>
    <lineage>
        <taxon>Bacteria</taxon>
        <taxon>Pseudomonadati</taxon>
        <taxon>Pseudomonadota</taxon>
        <taxon>Gammaproteobacteria</taxon>
        <taxon>Enterobacterales</taxon>
        <taxon>Enterobacteriaceae</taxon>
        <taxon>Escherichia</taxon>
    </lineage>
</organism>
<evidence type="ECO:0000255" key="1">
    <source>
        <dbReference type="HAMAP-Rule" id="MF_00564"/>
    </source>
</evidence>
<protein>
    <recommendedName>
        <fullName evidence="1">Ribonuclease PH</fullName>
        <shortName evidence="1">RNase PH</shortName>
        <ecNumber evidence="1">2.7.7.56</ecNumber>
    </recommendedName>
    <alternativeName>
        <fullName evidence="1">tRNA nucleotidyltransferase</fullName>
    </alternativeName>
</protein>
<reference key="1">
    <citation type="journal article" date="2008" name="J. Bacteriol.">
        <title>Insights into the environmental resistance gene pool from the genome sequence of the multidrug-resistant environmental isolate Escherichia coli SMS-3-5.</title>
        <authorList>
            <person name="Fricke W.F."/>
            <person name="Wright M.S."/>
            <person name="Lindell A.H."/>
            <person name="Harkins D.M."/>
            <person name="Baker-Austin C."/>
            <person name="Ravel J."/>
            <person name="Stepanauskas R."/>
        </authorList>
    </citation>
    <scope>NUCLEOTIDE SEQUENCE [LARGE SCALE GENOMIC DNA]</scope>
    <source>
        <strain>SMS-3-5 / SECEC</strain>
    </source>
</reference>